<evidence type="ECO:0000255" key="1">
    <source>
        <dbReference type="HAMAP-Rule" id="MF_01814"/>
    </source>
</evidence>
<keyword id="KW-0238">DNA-binding</keyword>
<keyword id="KW-0275">Fatty acid biosynthesis</keyword>
<keyword id="KW-0276">Fatty acid metabolism</keyword>
<keyword id="KW-0444">Lipid biosynthesis</keyword>
<keyword id="KW-0443">Lipid metabolism</keyword>
<keyword id="KW-0678">Repressor</keyword>
<keyword id="KW-0804">Transcription</keyword>
<keyword id="KW-0805">Transcription regulation</keyword>
<accession>C3P625</accession>
<organism>
    <name type="scientific">Bacillus anthracis (strain A0248)</name>
    <dbReference type="NCBI Taxonomy" id="592021"/>
    <lineage>
        <taxon>Bacteria</taxon>
        <taxon>Bacillati</taxon>
        <taxon>Bacillota</taxon>
        <taxon>Bacilli</taxon>
        <taxon>Bacillales</taxon>
        <taxon>Bacillaceae</taxon>
        <taxon>Bacillus</taxon>
        <taxon>Bacillus cereus group</taxon>
    </lineage>
</organism>
<name>FAPR_BACAA</name>
<gene>
    <name evidence="1" type="primary">fapR</name>
    <name type="ordered locus">BAA_4016</name>
</gene>
<protein>
    <recommendedName>
        <fullName evidence="1">Transcription factor FapR</fullName>
    </recommendedName>
    <alternativeName>
        <fullName evidence="1">Fatty acid and phospholipid biosynthesis regulator</fullName>
    </alternativeName>
</protein>
<sequence>MKKRRSKKERQELLQQTIETNPFITDEDLAEKFQVSIQTVRLDRMELSIPELRERIKHVATKQHEEDVKSLPLEEVVGEIIDIELDRHAISIFEVKVEHVFKRNQIARGHHLFAQANSLAVAVIDEELALTAKSTIRYIRPVKLGERVVAKARVEDVENDKGRTVVKVRSFVGEELVFTGTFEMYRSSNYSEEGNNL</sequence>
<proteinExistence type="inferred from homology"/>
<dbReference type="EMBL" id="CP001598">
    <property type="protein sequence ID" value="ACQ46419.1"/>
    <property type="molecule type" value="Genomic_DNA"/>
</dbReference>
<dbReference type="RefSeq" id="WP_000747352.1">
    <property type="nucleotide sequence ID" value="NC_012659.1"/>
</dbReference>
<dbReference type="SMR" id="C3P625"/>
<dbReference type="GeneID" id="93007258"/>
<dbReference type="KEGG" id="bai:BAA_4016"/>
<dbReference type="HOGENOM" id="CLU_095708_0_0_9"/>
<dbReference type="GO" id="GO:0003677">
    <property type="term" value="F:DNA binding"/>
    <property type="evidence" value="ECO:0007669"/>
    <property type="project" value="UniProtKB-KW"/>
</dbReference>
<dbReference type="GO" id="GO:0003700">
    <property type="term" value="F:DNA-binding transcription factor activity"/>
    <property type="evidence" value="ECO:0007669"/>
    <property type="project" value="UniProtKB-UniRule"/>
</dbReference>
<dbReference type="GO" id="GO:0006633">
    <property type="term" value="P:fatty acid biosynthetic process"/>
    <property type="evidence" value="ECO:0007669"/>
    <property type="project" value="UniProtKB-KW"/>
</dbReference>
<dbReference type="GO" id="GO:0045892">
    <property type="term" value="P:negative regulation of DNA-templated transcription"/>
    <property type="evidence" value="ECO:0007669"/>
    <property type="project" value="UniProtKB-UniRule"/>
</dbReference>
<dbReference type="GO" id="GO:0045717">
    <property type="term" value="P:negative regulation of fatty acid biosynthetic process"/>
    <property type="evidence" value="ECO:0007669"/>
    <property type="project" value="UniProtKB-UniRule"/>
</dbReference>
<dbReference type="CDD" id="cd03440">
    <property type="entry name" value="hot_dog"/>
    <property type="match status" value="1"/>
</dbReference>
<dbReference type="Gene3D" id="3.10.129.10">
    <property type="entry name" value="Hotdog Thioesterase"/>
    <property type="match status" value="1"/>
</dbReference>
<dbReference type="Gene3D" id="1.10.10.10">
    <property type="entry name" value="Winged helix-like DNA-binding domain superfamily/Winged helix DNA-binding domain"/>
    <property type="match status" value="1"/>
</dbReference>
<dbReference type="HAMAP" id="MF_01814">
    <property type="entry name" value="Transcrip_fact_FapR"/>
    <property type="match status" value="1"/>
</dbReference>
<dbReference type="InterPro" id="IPR029069">
    <property type="entry name" value="HotDog_dom_sf"/>
</dbReference>
<dbReference type="InterPro" id="IPR006683">
    <property type="entry name" value="Thioestr_dom"/>
</dbReference>
<dbReference type="InterPro" id="IPR017275">
    <property type="entry name" value="Transcription_factor_FapR"/>
</dbReference>
<dbReference type="InterPro" id="IPR036388">
    <property type="entry name" value="WH-like_DNA-bd_sf"/>
</dbReference>
<dbReference type="InterPro" id="IPR036390">
    <property type="entry name" value="WH_DNA-bd_sf"/>
</dbReference>
<dbReference type="NCBIfam" id="NF003359">
    <property type="entry name" value="PRK04424.1"/>
    <property type="match status" value="1"/>
</dbReference>
<dbReference type="Pfam" id="PF03061">
    <property type="entry name" value="4HBT"/>
    <property type="match status" value="1"/>
</dbReference>
<dbReference type="PIRSF" id="PIRSF037733">
    <property type="entry name" value="Transcription_factor_FapR"/>
    <property type="match status" value="1"/>
</dbReference>
<dbReference type="SUPFAM" id="SSF54637">
    <property type="entry name" value="Thioesterase/thiol ester dehydrase-isomerase"/>
    <property type="match status" value="1"/>
</dbReference>
<dbReference type="SUPFAM" id="SSF46785">
    <property type="entry name" value="Winged helix' DNA-binding domain"/>
    <property type="match status" value="1"/>
</dbReference>
<comment type="function">
    <text evidence="1">Transcriptional factor involved in regulation of membrane lipid biosynthesis by repressing genes involved in fatty acid and phospholipid metabolism.</text>
</comment>
<comment type="similarity">
    <text evidence="1">Belongs to the FapR family.</text>
</comment>
<reference key="1">
    <citation type="submission" date="2009-04" db="EMBL/GenBank/DDBJ databases">
        <title>Genome sequence of Bacillus anthracis A0248.</title>
        <authorList>
            <person name="Dodson R.J."/>
            <person name="Munk A.C."/>
            <person name="Bruce D."/>
            <person name="Detter C."/>
            <person name="Tapia R."/>
            <person name="Sutton G."/>
            <person name="Sims D."/>
            <person name="Brettin T."/>
        </authorList>
    </citation>
    <scope>NUCLEOTIDE SEQUENCE [LARGE SCALE GENOMIC DNA]</scope>
    <source>
        <strain>A0248</strain>
    </source>
</reference>
<feature type="chain" id="PRO_1000187827" description="Transcription factor FapR">
    <location>
        <begin position="1"/>
        <end position="197"/>
    </location>
</feature>